<organism>
    <name type="scientific">Bacillus subtilis</name>
    <dbReference type="NCBI Taxonomy" id="1423"/>
    <lineage>
        <taxon>Bacteria</taxon>
        <taxon>Bacillati</taxon>
        <taxon>Bacillota</taxon>
        <taxon>Bacilli</taxon>
        <taxon>Bacillales</taxon>
        <taxon>Bacillaceae</taxon>
        <taxon>Bacillus</taxon>
    </lineage>
</organism>
<comment type="function">
    <text evidence="2">SASP are bound to spore DNA. They are double-stranded DNA-binding proteins that cause DNA to change to an a-like conformation. They protect the DNA backbone from chemical and enzymatic cleavage and are thus involved in dormant spore's high resistance to UV light (By similarity).</text>
</comment>
<comment type="mass spectrometry" mass="7067.85" error="0.58" method="MALDI" evidence="4"/>
<comment type="mass spectrometry" mass="7067.83" error="0.16" method="Electrospray" evidence="4"/>
<comment type="miscellaneous">
    <text evidence="2">SASP are degraded in the first minutes of spore germination and provide amino acids for both new protein synthesis and metabolism.</text>
</comment>
<comment type="similarity">
    <text evidence="3">Belongs to the alpha/beta-type SASP family.</text>
</comment>
<name>SAS1_BACIU</name>
<reference evidence="5" key="1">
    <citation type="journal article" date="2004" name="J. Mass Spectrom.">
        <title>Complete sequences of small acid-soluble proteins from Bacillus globigii.</title>
        <authorList>
            <person name="Whiteaker J.R."/>
            <person name="Warscheid B."/>
            <person name="Pribil P."/>
            <person name="Hathout Y."/>
            <person name="Fenselau C."/>
        </authorList>
    </citation>
    <scope>PROTEIN SEQUENCE OF 2-70</scope>
    <scope>MASS SPECTROMETRY</scope>
    <source>
        <strain evidence="4">Globigii</strain>
    </source>
</reference>
<accession>P84583</accession>
<dbReference type="SMR" id="P84583"/>
<dbReference type="STRING" id="483913.AN935_05090"/>
<dbReference type="GO" id="GO:0003690">
    <property type="term" value="F:double-stranded DNA binding"/>
    <property type="evidence" value="ECO:0007669"/>
    <property type="project" value="InterPro"/>
</dbReference>
<dbReference type="GO" id="GO:0006265">
    <property type="term" value="P:DNA topological change"/>
    <property type="evidence" value="ECO:0007669"/>
    <property type="project" value="InterPro"/>
</dbReference>
<dbReference type="GO" id="GO:0030435">
    <property type="term" value="P:sporulation resulting in formation of a cellular spore"/>
    <property type="evidence" value="ECO:0007669"/>
    <property type="project" value="UniProtKB-KW"/>
</dbReference>
<dbReference type="Gene3D" id="6.10.10.80">
    <property type="entry name" value="Small, acid-soluble spore protein, alpha/beta type-like"/>
    <property type="match status" value="1"/>
</dbReference>
<dbReference type="InterPro" id="IPR001448">
    <property type="entry name" value="SASP_alpha/beta-type"/>
</dbReference>
<dbReference type="InterPro" id="IPR018126">
    <property type="entry name" value="SASP_alpha/beta-type_CS"/>
</dbReference>
<dbReference type="InterPro" id="IPR050847">
    <property type="entry name" value="SASP_DNA-binding"/>
</dbReference>
<dbReference type="InterPro" id="IPR038300">
    <property type="entry name" value="SASP_sf_alpha/beta"/>
</dbReference>
<dbReference type="PANTHER" id="PTHR36107">
    <property type="entry name" value="SMALL, ACID-SOLUBLE SPORE PROTEIN A"/>
    <property type="match status" value="1"/>
</dbReference>
<dbReference type="PANTHER" id="PTHR36107:SF1">
    <property type="entry name" value="SMALL, ACID-SOLUBLE SPORE PROTEIN A"/>
    <property type="match status" value="1"/>
</dbReference>
<dbReference type="Pfam" id="PF00269">
    <property type="entry name" value="SASP"/>
    <property type="match status" value="1"/>
</dbReference>
<dbReference type="PROSITE" id="PS00304">
    <property type="entry name" value="SASP_1"/>
    <property type="match status" value="1"/>
</dbReference>
<dbReference type="PROSITE" id="PS00684">
    <property type="entry name" value="SASP_2"/>
    <property type="match status" value="1"/>
</dbReference>
<keyword id="KW-0903">Direct protein sequencing</keyword>
<keyword id="KW-0238">DNA-binding</keyword>
<keyword id="KW-0749">Sporulation</keyword>
<protein>
    <recommendedName>
        <fullName>Small, acid-soluble spore protein 1</fullName>
        <shortName>SASP-1</shortName>
    </recommendedName>
</protein>
<feature type="initiator methionine" description="Removed" evidence="4">
    <location>
        <position position="1"/>
    </location>
</feature>
<feature type="chain" id="PRO_0000196303" description="Small, acid-soluble spore protein 1">
    <location>
        <begin position="2"/>
        <end position="70"/>
    </location>
</feature>
<feature type="site" description="Cleavage; by spore protease" evidence="1">
    <location>
        <begin position="28"/>
        <end position="29"/>
    </location>
</feature>
<evidence type="ECO:0000250" key="1"/>
<evidence type="ECO:0000250" key="2">
    <source>
        <dbReference type="UniProtKB" id="P06552"/>
    </source>
</evidence>
<evidence type="ECO:0000255" key="3"/>
<evidence type="ECO:0000269" key="4">
    <source>
    </source>
</evidence>
<evidence type="ECO:0000305" key="5"/>
<proteinExistence type="evidence at protein level"/>
<sequence length="70" mass="7199">MPNQSGSNSSNQLLVPGAAQAIDQMKFEIASEFGVNLGAETTSRANGSVGGEITKRLVSFAQQQMGGGVQ</sequence>